<name>KHSE_CAUVN</name>
<proteinExistence type="inferred from homology"/>
<evidence type="ECO:0000255" key="1">
    <source>
        <dbReference type="HAMAP-Rule" id="MF_00301"/>
    </source>
</evidence>
<feature type="chain" id="PRO_1000196944" description="Homoserine kinase">
    <location>
        <begin position="1"/>
        <end position="317"/>
    </location>
</feature>
<gene>
    <name evidence="1" type="primary">thrB</name>
    <name type="ordered locus">CCNA_03475</name>
</gene>
<protein>
    <recommendedName>
        <fullName evidence="1">Homoserine kinase</fullName>
        <shortName evidence="1">HK</shortName>
        <shortName evidence="1">HSK</shortName>
        <ecNumber evidence="1">2.7.1.39</ecNumber>
    </recommendedName>
</protein>
<sequence length="317" mass="35025">MAVYTDITDQELEAFLEGYDLGAPLAFKGIAEGVENSNFLLETEKGRYILTVYERRVKAEDLPYFLNMLTWLADRGYPSARPIPTRSGATLSSLRGKPAAIVEFLPGLSVRKPTAAHCREAGEGLAWLHLAGEGYPGRRANDLGQAAWSPLFSKHRKAAEDLKPGLSATIDNDLAQLSLMWPRNLPTGTIHADYFPDNVFFQSNGKFAAAIDFYFACDDAYAYDVAVTLNAWCFEADGSFNITAAKALLNGYERRRPLSPIEKEALPILARGAAMRFFLTRLADWGSTPAGALVRPKDPLEYERKLAVHREGLVLFA</sequence>
<comment type="catalytic activity">
    <reaction evidence="1">
        <text>L-homoserine + ATP = O-phospho-L-homoserine + ADP + H(+)</text>
        <dbReference type="Rhea" id="RHEA:13985"/>
        <dbReference type="ChEBI" id="CHEBI:15378"/>
        <dbReference type="ChEBI" id="CHEBI:30616"/>
        <dbReference type="ChEBI" id="CHEBI:57476"/>
        <dbReference type="ChEBI" id="CHEBI:57590"/>
        <dbReference type="ChEBI" id="CHEBI:456216"/>
        <dbReference type="EC" id="2.7.1.39"/>
    </reaction>
</comment>
<comment type="pathway">
    <text evidence="1">Amino-acid biosynthesis; L-threonine biosynthesis; L-threonine from L-aspartate: step 4/5.</text>
</comment>
<comment type="similarity">
    <text evidence="1">Belongs to the pseudomonas-type ThrB family.</text>
</comment>
<reference key="1">
    <citation type="journal article" date="2010" name="J. Bacteriol.">
        <title>The genetic basis of laboratory adaptation in Caulobacter crescentus.</title>
        <authorList>
            <person name="Marks M.E."/>
            <person name="Castro-Rojas C.M."/>
            <person name="Teiling C."/>
            <person name="Du L."/>
            <person name="Kapatral V."/>
            <person name="Walunas T.L."/>
            <person name="Crosson S."/>
        </authorList>
    </citation>
    <scope>NUCLEOTIDE SEQUENCE [LARGE SCALE GENOMIC DNA]</scope>
    <source>
        <strain>NA1000 / CB15N</strain>
    </source>
</reference>
<dbReference type="EC" id="2.7.1.39" evidence="1"/>
<dbReference type="EMBL" id="CP001340">
    <property type="protein sequence ID" value="ACL96940.1"/>
    <property type="molecule type" value="Genomic_DNA"/>
</dbReference>
<dbReference type="RefSeq" id="WP_010921193.1">
    <property type="nucleotide sequence ID" value="NC_011916.1"/>
</dbReference>
<dbReference type="RefSeq" id="YP_002518848.1">
    <property type="nucleotide sequence ID" value="NC_011916.1"/>
</dbReference>
<dbReference type="SMR" id="B8H4W6"/>
<dbReference type="GeneID" id="7332472"/>
<dbReference type="KEGG" id="ccs:CCNA_03475"/>
<dbReference type="PATRIC" id="fig|565050.3.peg.3389"/>
<dbReference type="HOGENOM" id="CLU_053300_1_0_5"/>
<dbReference type="OrthoDB" id="9777460at2"/>
<dbReference type="PhylomeDB" id="B8H4W6"/>
<dbReference type="UniPathway" id="UPA00050">
    <property type="reaction ID" value="UER00064"/>
</dbReference>
<dbReference type="Proteomes" id="UP000001364">
    <property type="component" value="Chromosome"/>
</dbReference>
<dbReference type="GO" id="GO:0005524">
    <property type="term" value="F:ATP binding"/>
    <property type="evidence" value="ECO:0007669"/>
    <property type="project" value="UniProtKB-KW"/>
</dbReference>
<dbReference type="GO" id="GO:0004413">
    <property type="term" value="F:homoserine kinase activity"/>
    <property type="evidence" value="ECO:0007669"/>
    <property type="project" value="UniProtKB-UniRule"/>
</dbReference>
<dbReference type="GO" id="GO:0009088">
    <property type="term" value="P:threonine biosynthetic process"/>
    <property type="evidence" value="ECO:0007669"/>
    <property type="project" value="UniProtKB-UniRule"/>
</dbReference>
<dbReference type="CDD" id="cd05153">
    <property type="entry name" value="HomoserineK_II"/>
    <property type="match status" value="1"/>
</dbReference>
<dbReference type="Gene3D" id="3.90.1200.10">
    <property type="match status" value="1"/>
</dbReference>
<dbReference type="Gene3D" id="3.30.200.20">
    <property type="entry name" value="Phosphorylase Kinase, domain 1"/>
    <property type="match status" value="1"/>
</dbReference>
<dbReference type="HAMAP" id="MF_00301">
    <property type="entry name" value="Homoser_kinase_2"/>
    <property type="match status" value="1"/>
</dbReference>
<dbReference type="InterPro" id="IPR002575">
    <property type="entry name" value="Aminoglycoside_PTrfase"/>
</dbReference>
<dbReference type="InterPro" id="IPR005280">
    <property type="entry name" value="Homoserine_kinase_II"/>
</dbReference>
<dbReference type="InterPro" id="IPR011009">
    <property type="entry name" value="Kinase-like_dom_sf"/>
</dbReference>
<dbReference type="InterPro" id="IPR050249">
    <property type="entry name" value="Pseudomonas-type_ThrB"/>
</dbReference>
<dbReference type="NCBIfam" id="NF003558">
    <property type="entry name" value="PRK05231.1"/>
    <property type="match status" value="1"/>
</dbReference>
<dbReference type="NCBIfam" id="TIGR00938">
    <property type="entry name" value="thrB_alt"/>
    <property type="match status" value="1"/>
</dbReference>
<dbReference type="PANTHER" id="PTHR21064:SF6">
    <property type="entry name" value="AMINOGLYCOSIDE PHOSPHOTRANSFERASE DOMAIN-CONTAINING PROTEIN"/>
    <property type="match status" value="1"/>
</dbReference>
<dbReference type="PANTHER" id="PTHR21064">
    <property type="entry name" value="AMINOGLYCOSIDE PHOSPHOTRANSFERASE DOMAIN-CONTAINING PROTEIN-RELATED"/>
    <property type="match status" value="1"/>
</dbReference>
<dbReference type="Pfam" id="PF01636">
    <property type="entry name" value="APH"/>
    <property type="match status" value="1"/>
</dbReference>
<dbReference type="SUPFAM" id="SSF56112">
    <property type="entry name" value="Protein kinase-like (PK-like)"/>
    <property type="match status" value="1"/>
</dbReference>
<accession>B8H4W6</accession>
<organism>
    <name type="scientific">Caulobacter vibrioides (strain NA1000 / CB15N)</name>
    <name type="common">Caulobacter crescentus</name>
    <dbReference type="NCBI Taxonomy" id="565050"/>
    <lineage>
        <taxon>Bacteria</taxon>
        <taxon>Pseudomonadati</taxon>
        <taxon>Pseudomonadota</taxon>
        <taxon>Alphaproteobacteria</taxon>
        <taxon>Caulobacterales</taxon>
        <taxon>Caulobacteraceae</taxon>
        <taxon>Caulobacter</taxon>
    </lineage>
</organism>
<keyword id="KW-0028">Amino-acid biosynthesis</keyword>
<keyword id="KW-0067">ATP-binding</keyword>
<keyword id="KW-0418">Kinase</keyword>
<keyword id="KW-0547">Nucleotide-binding</keyword>
<keyword id="KW-1185">Reference proteome</keyword>
<keyword id="KW-0791">Threonine biosynthesis</keyword>
<keyword id="KW-0808">Transferase</keyword>